<dbReference type="EMBL" id="F14703">
    <property type="protein sequence ID" value="CAA23202.1"/>
    <property type="molecule type" value="mRNA"/>
</dbReference>
<dbReference type="FunCoup" id="Q29315">
    <property type="interactions" value="1681"/>
</dbReference>
<dbReference type="STRING" id="9823.ENSSSCP00000052173"/>
<dbReference type="PaxDb" id="9823-ENSSSCP00000013652"/>
<dbReference type="PeptideAtlas" id="Q29315"/>
<dbReference type="eggNOG" id="KOG3449">
    <property type="taxonomic scope" value="Eukaryota"/>
</dbReference>
<dbReference type="InParanoid" id="Q29315"/>
<dbReference type="Proteomes" id="UP000008227">
    <property type="component" value="Unplaced"/>
</dbReference>
<dbReference type="Proteomes" id="UP000314985">
    <property type="component" value="Unplaced"/>
</dbReference>
<dbReference type="Proteomes" id="UP000694570">
    <property type="component" value="Unplaced"/>
</dbReference>
<dbReference type="Proteomes" id="UP000694571">
    <property type="component" value="Unplaced"/>
</dbReference>
<dbReference type="Proteomes" id="UP000694720">
    <property type="component" value="Unplaced"/>
</dbReference>
<dbReference type="Proteomes" id="UP000694722">
    <property type="component" value="Unplaced"/>
</dbReference>
<dbReference type="Proteomes" id="UP000694723">
    <property type="component" value="Unplaced"/>
</dbReference>
<dbReference type="Proteomes" id="UP000694724">
    <property type="component" value="Unplaced"/>
</dbReference>
<dbReference type="Proteomes" id="UP000694725">
    <property type="component" value="Unplaced"/>
</dbReference>
<dbReference type="Proteomes" id="UP000694726">
    <property type="component" value="Unplaced"/>
</dbReference>
<dbReference type="Proteomes" id="UP000694727">
    <property type="component" value="Unplaced"/>
</dbReference>
<dbReference type="Proteomes" id="UP000694728">
    <property type="component" value="Unplaced"/>
</dbReference>
<dbReference type="GO" id="GO:0022625">
    <property type="term" value="C:cytosolic large ribosomal subunit"/>
    <property type="evidence" value="ECO:0007669"/>
    <property type="project" value="InterPro"/>
</dbReference>
<dbReference type="GO" id="GO:0003735">
    <property type="term" value="F:structural constituent of ribosome"/>
    <property type="evidence" value="ECO:0007669"/>
    <property type="project" value="InterPro"/>
</dbReference>
<dbReference type="GO" id="GO:0002182">
    <property type="term" value="P:cytoplasmic translational elongation"/>
    <property type="evidence" value="ECO:0007669"/>
    <property type="project" value="InterPro"/>
</dbReference>
<dbReference type="CDD" id="cd05833">
    <property type="entry name" value="Ribosomal_P2"/>
    <property type="match status" value="1"/>
</dbReference>
<dbReference type="FunFam" id="1.10.10.1410:FF:000002">
    <property type="entry name" value="60S acidic ribosomal protein P2"/>
    <property type="match status" value="1"/>
</dbReference>
<dbReference type="Gene3D" id="1.10.10.1410">
    <property type="match status" value="1"/>
</dbReference>
<dbReference type="HAMAP" id="MF_01478">
    <property type="entry name" value="Ribosomal_L12_arch"/>
    <property type="match status" value="1"/>
</dbReference>
<dbReference type="InterPro" id="IPR038716">
    <property type="entry name" value="P1/P2_N_sf"/>
</dbReference>
<dbReference type="InterPro" id="IPR027534">
    <property type="entry name" value="Ribosomal_P1/P2"/>
</dbReference>
<dbReference type="InterPro" id="IPR044076">
    <property type="entry name" value="Ribosomal_P2"/>
</dbReference>
<dbReference type="PANTHER" id="PTHR21141">
    <property type="entry name" value="60S ACIDIC RIBOSOMAL PROTEIN FAMILY MEMBER"/>
    <property type="match status" value="1"/>
</dbReference>
<dbReference type="PANTHER" id="PTHR21141:SF5">
    <property type="entry name" value="LARGE RIBOSOMAL SUBUNIT PROTEIN P2"/>
    <property type="match status" value="1"/>
</dbReference>
<dbReference type="Pfam" id="PF00428">
    <property type="entry name" value="Ribosomal_60s"/>
    <property type="match status" value="1"/>
</dbReference>
<proteinExistence type="inferred from homology"/>
<reference key="1">
    <citation type="journal article" date="1996" name="Mamm. Genome">
        <title>Evaluation and characterization of a porcine small intestine cDNA library: analysis of 839 clones.</title>
        <authorList>
            <person name="Winteroe A.K."/>
            <person name="Fredholm M."/>
            <person name="Davies W."/>
        </authorList>
    </citation>
    <scope>NUCLEOTIDE SEQUENCE [LARGE SCALE MRNA]</scope>
    <source>
        <tissue>Small intestine</tissue>
    </source>
</reference>
<comment type="function">
    <text>Plays an important role in the elongation step of protein synthesis.</text>
</comment>
<comment type="subunit">
    <text evidence="1">Heterodimer with RPLP1 at the lateral ribosomal stalk of the large ribosomal subunit.</text>
</comment>
<comment type="similarity">
    <text evidence="5">Belongs to the eukaryotic ribosomal protein P1/P2 family.</text>
</comment>
<keyword id="KW-0007">Acetylation</keyword>
<keyword id="KW-0597">Phosphoprotein</keyword>
<keyword id="KW-1185">Reference proteome</keyword>
<keyword id="KW-0687">Ribonucleoprotein</keyword>
<keyword id="KW-0689">Ribosomal protein</keyword>
<protein>
    <recommendedName>
        <fullName evidence="5">Large ribosomal subunit protein P2</fullName>
    </recommendedName>
    <alternativeName>
        <fullName>60S acidic ribosomal protein P2</fullName>
    </alternativeName>
</protein>
<sequence length="115" mass="11740">MRYVASYLLAALGGNTSPSAKDIKKXLDSVGIEADXDRLNKVISELNGKNIEDVIAQGIGKLASVPSGGAXAVAAAPGSXAPAAGSAPAAAEEKKEEKKEESEESDDDMGFGLFD</sequence>
<gene>
    <name type="primary">RPLP2</name>
</gene>
<accession>Q29315</accession>
<organism>
    <name type="scientific">Sus scrofa</name>
    <name type="common">Pig</name>
    <dbReference type="NCBI Taxonomy" id="9823"/>
    <lineage>
        <taxon>Eukaryota</taxon>
        <taxon>Metazoa</taxon>
        <taxon>Chordata</taxon>
        <taxon>Craniata</taxon>
        <taxon>Vertebrata</taxon>
        <taxon>Euteleostomi</taxon>
        <taxon>Mammalia</taxon>
        <taxon>Eutheria</taxon>
        <taxon>Laurasiatheria</taxon>
        <taxon>Artiodactyla</taxon>
        <taxon>Suina</taxon>
        <taxon>Suidae</taxon>
        <taxon>Sus</taxon>
    </lineage>
</organism>
<feature type="chain" id="PRO_0000157642" description="Large ribosomal subunit protein P2">
    <location>
        <begin position="1"/>
        <end position="115"/>
    </location>
</feature>
<feature type="region of interest" description="Disordered" evidence="4">
    <location>
        <begin position="69"/>
        <end position="115"/>
    </location>
</feature>
<feature type="compositionally biased region" description="Low complexity" evidence="4">
    <location>
        <begin position="69"/>
        <end position="90"/>
    </location>
</feature>
<feature type="compositionally biased region" description="Basic and acidic residues" evidence="4">
    <location>
        <begin position="91"/>
        <end position="101"/>
    </location>
</feature>
<feature type="modified residue" description="N-acetylmethionine" evidence="2">
    <location>
        <position position="1"/>
    </location>
</feature>
<feature type="modified residue" description="Phosphoserine" evidence="2">
    <location>
        <position position="17"/>
    </location>
</feature>
<feature type="modified residue" description="Phosphoserine" evidence="2">
    <location>
        <position position="19"/>
    </location>
</feature>
<feature type="modified residue" description="N6-acetyllysine; alternate" evidence="2">
    <location>
        <position position="21"/>
    </location>
</feature>
<feature type="modified residue" description="N6-succinyllysine; alternate" evidence="3">
    <location>
        <position position="21"/>
    </location>
</feature>
<feature type="modified residue" description="Phosphoserine" evidence="2">
    <location>
        <position position="79"/>
    </location>
</feature>
<feature type="modified residue" description="Phosphoserine" evidence="2">
    <location>
        <position position="86"/>
    </location>
</feature>
<feature type="modified residue" description="Phosphoserine" evidence="2">
    <location>
        <position position="102"/>
    </location>
</feature>
<feature type="modified residue" description="Phosphoserine" evidence="3">
    <location>
        <position position="105"/>
    </location>
</feature>
<evidence type="ECO:0000250" key="1"/>
<evidence type="ECO:0000250" key="2">
    <source>
        <dbReference type="UniProtKB" id="P05387"/>
    </source>
</evidence>
<evidence type="ECO:0000250" key="3">
    <source>
        <dbReference type="UniProtKB" id="P99027"/>
    </source>
</evidence>
<evidence type="ECO:0000256" key="4">
    <source>
        <dbReference type="SAM" id="MobiDB-lite"/>
    </source>
</evidence>
<evidence type="ECO:0000305" key="5"/>
<name>RLA2_PIG</name>